<proteinExistence type="inferred from homology"/>
<feature type="chain" id="PRO_0000332612" description="Ribonuclease H">
    <location>
        <begin position="1"/>
        <end position="143"/>
    </location>
</feature>
<feature type="domain" description="RNase H type-1" evidence="2">
    <location>
        <begin position="1"/>
        <end position="136"/>
    </location>
</feature>
<feature type="binding site" evidence="1">
    <location>
        <position position="9"/>
    </location>
    <ligand>
        <name>Mg(2+)</name>
        <dbReference type="ChEBI" id="CHEBI:18420"/>
        <label>1</label>
    </ligand>
</feature>
<feature type="binding site" evidence="1">
    <location>
        <position position="9"/>
    </location>
    <ligand>
        <name>Mg(2+)</name>
        <dbReference type="ChEBI" id="CHEBI:18420"/>
        <label>2</label>
    </ligand>
</feature>
<feature type="binding site" evidence="1">
    <location>
        <position position="47"/>
    </location>
    <ligand>
        <name>Mg(2+)</name>
        <dbReference type="ChEBI" id="CHEBI:18420"/>
        <label>1</label>
    </ligand>
</feature>
<feature type="binding site" evidence="1">
    <location>
        <position position="69"/>
    </location>
    <ligand>
        <name>Mg(2+)</name>
        <dbReference type="ChEBI" id="CHEBI:18420"/>
        <label>1</label>
    </ligand>
</feature>
<feature type="binding site" evidence="1">
    <location>
        <position position="128"/>
    </location>
    <ligand>
        <name>Mg(2+)</name>
        <dbReference type="ChEBI" id="CHEBI:18420"/>
        <label>2</label>
    </ligand>
</feature>
<sequence length="143" mass="16251">MQEIEIFCDGSSLGNPGPGGYAAILRYKDKEKIISGGEKFTTNNRMELRALNEALKILKRPCHITLYSDSQYVCQAINVWLIGWQKKNFAKVKNVDLWKEFLEVSKGHSIVAIWIKGHNGHAQNERCDSLAKLEAQKWVKTTT</sequence>
<keyword id="KW-0963">Cytoplasm</keyword>
<keyword id="KW-0255">Endonuclease</keyword>
<keyword id="KW-0378">Hydrolase</keyword>
<keyword id="KW-0460">Magnesium</keyword>
<keyword id="KW-0479">Metal-binding</keyword>
<keyword id="KW-0540">Nuclease</keyword>
<evidence type="ECO:0000255" key="1">
    <source>
        <dbReference type="HAMAP-Rule" id="MF_00042"/>
    </source>
</evidence>
<evidence type="ECO:0000255" key="2">
    <source>
        <dbReference type="PROSITE-ProRule" id="PRU00408"/>
    </source>
</evidence>
<name>RNH_HELAH</name>
<gene>
    <name evidence="1" type="primary">rnhA</name>
    <name type="ordered locus">Hac_0846</name>
</gene>
<accession>Q17XJ7</accession>
<protein>
    <recommendedName>
        <fullName evidence="1">Ribonuclease H</fullName>
        <shortName evidence="1">RNase H</shortName>
        <ecNumber evidence="1">3.1.26.4</ecNumber>
    </recommendedName>
</protein>
<comment type="function">
    <text evidence="1">Endonuclease that specifically degrades the RNA of RNA-DNA hybrids.</text>
</comment>
<comment type="catalytic activity">
    <reaction evidence="1">
        <text>Endonucleolytic cleavage to 5'-phosphomonoester.</text>
        <dbReference type="EC" id="3.1.26.4"/>
    </reaction>
</comment>
<comment type="cofactor">
    <cofactor evidence="1">
        <name>Mg(2+)</name>
        <dbReference type="ChEBI" id="CHEBI:18420"/>
    </cofactor>
    <text evidence="1">Binds 1 Mg(2+) ion per subunit. May bind a second metal ion at a regulatory site, or after substrate binding.</text>
</comment>
<comment type="subunit">
    <text evidence="1">Monomer.</text>
</comment>
<comment type="subcellular location">
    <subcellularLocation>
        <location evidence="1">Cytoplasm</location>
    </subcellularLocation>
</comment>
<comment type="similarity">
    <text evidence="1">Belongs to the RNase H family.</text>
</comment>
<reference key="1">
    <citation type="journal article" date="2006" name="PLoS Genet.">
        <title>Who ate whom? Adaptive Helicobacter genomic changes that accompanied a host jump from early humans to large felines.</title>
        <authorList>
            <person name="Eppinger M."/>
            <person name="Baar C."/>
            <person name="Linz B."/>
            <person name="Raddatz G."/>
            <person name="Lanz C."/>
            <person name="Keller H."/>
            <person name="Morelli G."/>
            <person name="Gressmann H."/>
            <person name="Achtman M."/>
            <person name="Schuster S.C."/>
        </authorList>
    </citation>
    <scope>NUCLEOTIDE SEQUENCE [LARGE SCALE GENOMIC DNA]</scope>
    <source>
        <strain>Sheeba</strain>
    </source>
</reference>
<dbReference type="EC" id="3.1.26.4" evidence="1"/>
<dbReference type="EMBL" id="AM260522">
    <property type="protein sequence ID" value="CAJ99629.1"/>
    <property type="molecule type" value="Genomic_DNA"/>
</dbReference>
<dbReference type="RefSeq" id="WP_011577742.1">
    <property type="nucleotide sequence ID" value="NC_008229.1"/>
</dbReference>
<dbReference type="SMR" id="Q17XJ7"/>
<dbReference type="STRING" id="382638.Hac_0846"/>
<dbReference type="GeneID" id="31758260"/>
<dbReference type="KEGG" id="hac:Hac_0846"/>
<dbReference type="eggNOG" id="COG0328">
    <property type="taxonomic scope" value="Bacteria"/>
</dbReference>
<dbReference type="HOGENOM" id="CLU_030894_6_0_7"/>
<dbReference type="OrthoDB" id="7845843at2"/>
<dbReference type="BioCyc" id="HACI382638:HAC_RS03645-MONOMER"/>
<dbReference type="Proteomes" id="UP000000775">
    <property type="component" value="Chromosome"/>
</dbReference>
<dbReference type="GO" id="GO:0005737">
    <property type="term" value="C:cytoplasm"/>
    <property type="evidence" value="ECO:0007669"/>
    <property type="project" value="UniProtKB-SubCell"/>
</dbReference>
<dbReference type="GO" id="GO:0000287">
    <property type="term" value="F:magnesium ion binding"/>
    <property type="evidence" value="ECO:0007669"/>
    <property type="project" value="UniProtKB-UniRule"/>
</dbReference>
<dbReference type="GO" id="GO:0003676">
    <property type="term" value="F:nucleic acid binding"/>
    <property type="evidence" value="ECO:0007669"/>
    <property type="project" value="InterPro"/>
</dbReference>
<dbReference type="GO" id="GO:0004523">
    <property type="term" value="F:RNA-DNA hybrid ribonuclease activity"/>
    <property type="evidence" value="ECO:0007669"/>
    <property type="project" value="UniProtKB-UniRule"/>
</dbReference>
<dbReference type="GO" id="GO:0043137">
    <property type="term" value="P:DNA replication, removal of RNA primer"/>
    <property type="evidence" value="ECO:0007669"/>
    <property type="project" value="TreeGrafter"/>
</dbReference>
<dbReference type="CDD" id="cd09278">
    <property type="entry name" value="RNase_HI_prokaryote_like"/>
    <property type="match status" value="1"/>
</dbReference>
<dbReference type="FunFam" id="3.30.420.10:FF:000089">
    <property type="entry name" value="Ribonuclease H"/>
    <property type="match status" value="1"/>
</dbReference>
<dbReference type="Gene3D" id="3.30.420.10">
    <property type="entry name" value="Ribonuclease H-like superfamily/Ribonuclease H"/>
    <property type="match status" value="1"/>
</dbReference>
<dbReference type="HAMAP" id="MF_00042">
    <property type="entry name" value="RNase_H"/>
    <property type="match status" value="1"/>
</dbReference>
<dbReference type="InterPro" id="IPR050092">
    <property type="entry name" value="RNase_H"/>
</dbReference>
<dbReference type="InterPro" id="IPR012337">
    <property type="entry name" value="RNaseH-like_sf"/>
</dbReference>
<dbReference type="InterPro" id="IPR002156">
    <property type="entry name" value="RNaseH_domain"/>
</dbReference>
<dbReference type="InterPro" id="IPR036397">
    <property type="entry name" value="RNaseH_sf"/>
</dbReference>
<dbReference type="InterPro" id="IPR022892">
    <property type="entry name" value="RNaseHI"/>
</dbReference>
<dbReference type="NCBIfam" id="NF001236">
    <property type="entry name" value="PRK00203.1"/>
    <property type="match status" value="1"/>
</dbReference>
<dbReference type="PANTHER" id="PTHR10642">
    <property type="entry name" value="RIBONUCLEASE H1"/>
    <property type="match status" value="1"/>
</dbReference>
<dbReference type="PANTHER" id="PTHR10642:SF26">
    <property type="entry name" value="RIBONUCLEASE H1"/>
    <property type="match status" value="1"/>
</dbReference>
<dbReference type="Pfam" id="PF00075">
    <property type="entry name" value="RNase_H"/>
    <property type="match status" value="1"/>
</dbReference>
<dbReference type="SUPFAM" id="SSF53098">
    <property type="entry name" value="Ribonuclease H-like"/>
    <property type="match status" value="1"/>
</dbReference>
<dbReference type="PROSITE" id="PS50879">
    <property type="entry name" value="RNASE_H_1"/>
    <property type="match status" value="1"/>
</dbReference>
<organism>
    <name type="scientific">Helicobacter acinonychis (strain Sheeba)</name>
    <dbReference type="NCBI Taxonomy" id="382638"/>
    <lineage>
        <taxon>Bacteria</taxon>
        <taxon>Pseudomonadati</taxon>
        <taxon>Campylobacterota</taxon>
        <taxon>Epsilonproteobacteria</taxon>
        <taxon>Campylobacterales</taxon>
        <taxon>Helicobacteraceae</taxon>
        <taxon>Helicobacter</taxon>
    </lineage>
</organism>